<protein>
    <recommendedName>
        <fullName evidence="6">Copper-exporting P-type ATPase</fullName>
        <ecNumber evidence="5">7.2.2.8</ecNumber>
    </recommendedName>
    <alternativeName>
        <fullName>Copper-exporting P-type ATPase A</fullName>
    </alternativeName>
</protein>
<evidence type="ECO:0000250" key="1">
    <source>
        <dbReference type="UniProtKB" id="Q59385"/>
    </source>
</evidence>
<evidence type="ECO:0000255" key="2"/>
<evidence type="ECO:0000255" key="3">
    <source>
        <dbReference type="PROSITE-ProRule" id="PRU00280"/>
    </source>
</evidence>
<evidence type="ECO:0000269" key="4">
    <source>
    </source>
</evidence>
<evidence type="ECO:0000269" key="5">
    <source>
    </source>
</evidence>
<evidence type="ECO:0000305" key="6"/>
<evidence type="ECO:0007744" key="7">
    <source>
    </source>
</evidence>
<sequence>MTTAVTGEHHASVQRIQLRISGMSCSACAHRVESTLNKLPGVRAAVNFGTRVATIDTSEAVDAAALCQAVRRAGYQADLCTDDGRSASDPDADHARQLLIRLAIAAVLFVPVADLSVMFGVVPATRFTGWQWVLSALALPVVTWAAWPFHRVAMRNARHHAASMETLISVGITAATIWSLYTVFGNHSPIERSGIWQALLGSDAIYFEVAAGVTVFVLVGRYFEARAKSQAGSALRALAALSAKEVAVLLPDGSEMVIPADELKEQQRFVVRPGQIVAADGLAVDGSAAVDMSAMTGEAKPTRVRPGGQVIGGTTVLDGRLIVEAAAVGADTQFAGMVRLVEQAQAQKADAQRLADRISSVFVPAVLVIAALTAAGWLIAGGQPDRAVSAALAVLVIACPCALGLATPTAMMVASGRGAQLGIFLKGYKSLEATRAVDTVVFDKTGTLTTGRLQVSAVTAAPGWEADQVLALAATVEAASEHSVALAIAAATTRRDAVTDFRAIPGRGVSGTVSGRAVRVGKPSWIGSSSCHPNMRAARRHAESLGETAVFVEVDGEPCGVIAVADAVKDSARDAVAALADRGLRTMLLTGDNPESAAAVATRVGIDEVIADILPEGKVDVIEQLRDRGHVVAMVGDGINDGPALARADLGMAIGRGTDVAIGAADIILVRDHLDVVPLALDLARATMRTVKLNMVWAFGYNIAAIPVAAAGLLNPLVAGAAMAFSSFFVVSNSLRLRKFGRYPLGCGTVGGPQMTAPSSA</sequence>
<dbReference type="EC" id="7.2.2.8" evidence="5"/>
<dbReference type="EMBL" id="AL123456">
    <property type="protein sequence ID" value="CCP42817.1"/>
    <property type="molecule type" value="Genomic_DNA"/>
</dbReference>
<dbReference type="PIR" id="D70750">
    <property type="entry name" value="D70750"/>
</dbReference>
<dbReference type="RefSeq" id="NP_214606.1">
    <property type="nucleotide sequence ID" value="NC_000962.3"/>
</dbReference>
<dbReference type="RefSeq" id="WP_003899808.1">
    <property type="nucleotide sequence ID" value="NZ_NVQJ01000005.1"/>
</dbReference>
<dbReference type="SMR" id="P9WPU1"/>
<dbReference type="FunCoup" id="P9WPU1">
    <property type="interactions" value="345"/>
</dbReference>
<dbReference type="STRING" id="83332.Rv0092"/>
<dbReference type="TCDB" id="3.A.3.5.41">
    <property type="family name" value="the p-type atpase (p-atpase) superfamily"/>
</dbReference>
<dbReference type="iPTMnet" id="P9WPU1"/>
<dbReference type="PaxDb" id="83332-Rv0092"/>
<dbReference type="DNASU" id="886946"/>
<dbReference type="GeneID" id="886946"/>
<dbReference type="KEGG" id="mtu:Rv0092"/>
<dbReference type="KEGG" id="mtv:RVBD_0092"/>
<dbReference type="TubercuList" id="Rv0092"/>
<dbReference type="eggNOG" id="COG2217">
    <property type="taxonomic scope" value="Bacteria"/>
</dbReference>
<dbReference type="InParanoid" id="P9WPU1"/>
<dbReference type="OrthoDB" id="7059309at2"/>
<dbReference type="PhylomeDB" id="P9WPU1"/>
<dbReference type="Proteomes" id="UP000001584">
    <property type="component" value="Chromosome"/>
</dbReference>
<dbReference type="GO" id="GO:0005576">
    <property type="term" value="C:extracellular region"/>
    <property type="evidence" value="ECO:0007005"/>
    <property type="project" value="MTBBASE"/>
</dbReference>
<dbReference type="GO" id="GO:0016020">
    <property type="term" value="C:membrane"/>
    <property type="evidence" value="ECO:0000318"/>
    <property type="project" value="GO_Central"/>
</dbReference>
<dbReference type="GO" id="GO:0009274">
    <property type="term" value="C:peptidoglycan-based cell wall"/>
    <property type="evidence" value="ECO:0007005"/>
    <property type="project" value="MTBBASE"/>
</dbReference>
<dbReference type="GO" id="GO:0005886">
    <property type="term" value="C:plasma membrane"/>
    <property type="evidence" value="ECO:0007669"/>
    <property type="project" value="UniProtKB-SubCell"/>
</dbReference>
<dbReference type="GO" id="GO:0005524">
    <property type="term" value="F:ATP binding"/>
    <property type="evidence" value="ECO:0007669"/>
    <property type="project" value="UniProtKB-KW"/>
</dbReference>
<dbReference type="GO" id="GO:0016887">
    <property type="term" value="F:ATP hydrolysis activity"/>
    <property type="evidence" value="ECO:0007669"/>
    <property type="project" value="InterPro"/>
</dbReference>
<dbReference type="GO" id="GO:0005507">
    <property type="term" value="F:copper ion binding"/>
    <property type="evidence" value="ECO:0000318"/>
    <property type="project" value="GO_Central"/>
</dbReference>
<dbReference type="GO" id="GO:0043682">
    <property type="term" value="F:P-type divalent copper transporter activity"/>
    <property type="evidence" value="ECO:0000318"/>
    <property type="project" value="GO_Central"/>
</dbReference>
<dbReference type="GO" id="GO:0140581">
    <property type="term" value="F:P-type monovalent copper transporter activity"/>
    <property type="evidence" value="ECO:0007669"/>
    <property type="project" value="UniProtKB-EC"/>
</dbReference>
<dbReference type="GO" id="GO:0055070">
    <property type="term" value="P:copper ion homeostasis"/>
    <property type="evidence" value="ECO:0000318"/>
    <property type="project" value="GO_Central"/>
</dbReference>
<dbReference type="CDD" id="cd00371">
    <property type="entry name" value="HMA"/>
    <property type="match status" value="1"/>
</dbReference>
<dbReference type="CDD" id="cd02094">
    <property type="entry name" value="P-type_ATPase_Cu-like"/>
    <property type="match status" value="1"/>
</dbReference>
<dbReference type="FunFam" id="3.30.70.100:FF:000005">
    <property type="entry name" value="Copper-exporting P-type ATPase A"/>
    <property type="match status" value="1"/>
</dbReference>
<dbReference type="Gene3D" id="3.30.70.100">
    <property type="match status" value="1"/>
</dbReference>
<dbReference type="Gene3D" id="3.40.1110.10">
    <property type="entry name" value="Calcium-transporting ATPase, cytoplasmic domain N"/>
    <property type="match status" value="1"/>
</dbReference>
<dbReference type="Gene3D" id="2.70.150.10">
    <property type="entry name" value="Calcium-transporting ATPase, cytoplasmic transduction domain A"/>
    <property type="match status" value="1"/>
</dbReference>
<dbReference type="Gene3D" id="3.40.50.1000">
    <property type="entry name" value="HAD superfamily/HAD-like"/>
    <property type="match status" value="1"/>
</dbReference>
<dbReference type="InterPro" id="IPR023299">
    <property type="entry name" value="ATPase_P-typ_cyto_dom_N"/>
</dbReference>
<dbReference type="InterPro" id="IPR018303">
    <property type="entry name" value="ATPase_P-typ_P_site"/>
</dbReference>
<dbReference type="InterPro" id="IPR023298">
    <property type="entry name" value="ATPase_P-typ_TM_dom_sf"/>
</dbReference>
<dbReference type="InterPro" id="IPR008250">
    <property type="entry name" value="ATPase_P-typ_transduc_dom_A_sf"/>
</dbReference>
<dbReference type="InterPro" id="IPR000579">
    <property type="entry name" value="Cation-trans_P-type_ATPase_A/B"/>
</dbReference>
<dbReference type="InterPro" id="IPR036412">
    <property type="entry name" value="HAD-like_sf"/>
</dbReference>
<dbReference type="InterPro" id="IPR023214">
    <property type="entry name" value="HAD_sf"/>
</dbReference>
<dbReference type="InterPro" id="IPR017969">
    <property type="entry name" value="Heavy-metal-associated_CS"/>
</dbReference>
<dbReference type="InterPro" id="IPR006121">
    <property type="entry name" value="HMA_dom"/>
</dbReference>
<dbReference type="InterPro" id="IPR036163">
    <property type="entry name" value="HMA_dom_sf"/>
</dbReference>
<dbReference type="InterPro" id="IPR027256">
    <property type="entry name" value="P-typ_ATPase_IB"/>
</dbReference>
<dbReference type="InterPro" id="IPR001757">
    <property type="entry name" value="P_typ_ATPase"/>
</dbReference>
<dbReference type="InterPro" id="IPR044492">
    <property type="entry name" value="P_typ_ATPase_HD_dom"/>
</dbReference>
<dbReference type="NCBIfam" id="TIGR01511">
    <property type="entry name" value="ATPase-IB1_Cu"/>
    <property type="match status" value="1"/>
</dbReference>
<dbReference type="NCBIfam" id="TIGR01525">
    <property type="entry name" value="ATPase-IB_hvy"/>
    <property type="match status" value="1"/>
</dbReference>
<dbReference type="NCBIfam" id="TIGR01494">
    <property type="entry name" value="ATPase_P-type"/>
    <property type="match status" value="1"/>
</dbReference>
<dbReference type="PANTHER" id="PTHR43520">
    <property type="entry name" value="ATP7, ISOFORM B"/>
    <property type="match status" value="1"/>
</dbReference>
<dbReference type="PANTHER" id="PTHR43520:SF8">
    <property type="entry name" value="P-TYPE CU(+) TRANSPORTER"/>
    <property type="match status" value="1"/>
</dbReference>
<dbReference type="Pfam" id="PF00122">
    <property type="entry name" value="E1-E2_ATPase"/>
    <property type="match status" value="1"/>
</dbReference>
<dbReference type="Pfam" id="PF00403">
    <property type="entry name" value="HMA"/>
    <property type="match status" value="1"/>
</dbReference>
<dbReference type="Pfam" id="PF00702">
    <property type="entry name" value="Hydrolase"/>
    <property type="match status" value="1"/>
</dbReference>
<dbReference type="PRINTS" id="PR00119">
    <property type="entry name" value="CATATPASE"/>
</dbReference>
<dbReference type="PRINTS" id="PR00940">
    <property type="entry name" value="CATPATPASEA"/>
</dbReference>
<dbReference type="SFLD" id="SFLDS00003">
    <property type="entry name" value="Haloacid_Dehalogenase"/>
    <property type="match status" value="1"/>
</dbReference>
<dbReference type="SFLD" id="SFLDF00027">
    <property type="entry name" value="p-type_atpase"/>
    <property type="match status" value="1"/>
</dbReference>
<dbReference type="SUPFAM" id="SSF81653">
    <property type="entry name" value="Calcium ATPase, transduction domain A"/>
    <property type="match status" value="1"/>
</dbReference>
<dbReference type="SUPFAM" id="SSF81665">
    <property type="entry name" value="Calcium ATPase, transmembrane domain M"/>
    <property type="match status" value="1"/>
</dbReference>
<dbReference type="SUPFAM" id="SSF56784">
    <property type="entry name" value="HAD-like"/>
    <property type="match status" value="1"/>
</dbReference>
<dbReference type="SUPFAM" id="SSF55008">
    <property type="entry name" value="HMA, heavy metal-associated domain"/>
    <property type="match status" value="1"/>
</dbReference>
<dbReference type="PROSITE" id="PS00154">
    <property type="entry name" value="ATPASE_E1_E2"/>
    <property type="match status" value="1"/>
</dbReference>
<dbReference type="PROSITE" id="PS01047">
    <property type="entry name" value="HMA_1"/>
    <property type="match status" value="1"/>
</dbReference>
<dbReference type="PROSITE" id="PS50846">
    <property type="entry name" value="HMA_2"/>
    <property type="match status" value="1"/>
</dbReference>
<feature type="initiator methionine" description="Removed" evidence="7">
    <location>
        <position position="1"/>
    </location>
</feature>
<feature type="chain" id="PRO_0000046165" description="Copper-exporting P-type ATPase">
    <location>
        <begin position="2"/>
        <end position="761"/>
    </location>
</feature>
<feature type="transmembrane region" description="Helical" evidence="2">
    <location>
        <begin position="102"/>
        <end position="122"/>
    </location>
</feature>
<feature type="transmembrane region" description="Helical" evidence="2">
    <location>
        <begin position="129"/>
        <end position="149"/>
    </location>
</feature>
<feature type="transmembrane region" description="Helical" evidence="2">
    <location>
        <begin position="164"/>
        <end position="184"/>
    </location>
</feature>
<feature type="transmembrane region" description="Helical" evidence="2">
    <location>
        <begin position="199"/>
        <end position="219"/>
    </location>
</feature>
<feature type="transmembrane region" description="Helical" evidence="2">
    <location>
        <begin position="361"/>
        <end position="381"/>
    </location>
</feature>
<feature type="transmembrane region" description="Helical" evidence="2">
    <location>
        <begin position="387"/>
        <end position="407"/>
    </location>
</feature>
<feature type="transmembrane region" description="Helical" evidence="2">
    <location>
        <begin position="695"/>
        <end position="714"/>
    </location>
</feature>
<feature type="transmembrane region" description="Helical" evidence="2">
    <location>
        <begin position="718"/>
        <end position="735"/>
    </location>
</feature>
<feature type="domain" description="HMA" evidence="3">
    <location>
        <begin position="14"/>
        <end position="78"/>
    </location>
</feature>
<feature type="active site" description="4-aspartylphosphate intermediate" evidence="1">
    <location>
        <position position="443"/>
    </location>
</feature>
<feature type="binding site" evidence="3">
    <location>
        <position position="25"/>
    </location>
    <ligand>
        <name>Cu(+)</name>
        <dbReference type="ChEBI" id="CHEBI:49552"/>
    </ligand>
</feature>
<feature type="binding site" evidence="3">
    <location>
        <position position="28"/>
    </location>
    <ligand>
        <name>Cu(+)</name>
        <dbReference type="ChEBI" id="CHEBI:49552"/>
    </ligand>
</feature>
<feature type="modified residue" description="N-acetylthreonine" evidence="7">
    <location>
        <position position="2"/>
    </location>
</feature>
<organism>
    <name type="scientific">Mycobacterium tuberculosis (strain ATCC 25618 / H37Rv)</name>
    <dbReference type="NCBI Taxonomy" id="83332"/>
    <lineage>
        <taxon>Bacteria</taxon>
        <taxon>Bacillati</taxon>
        <taxon>Actinomycetota</taxon>
        <taxon>Actinomycetes</taxon>
        <taxon>Mycobacteriales</taxon>
        <taxon>Mycobacteriaceae</taxon>
        <taxon>Mycobacterium</taxon>
        <taxon>Mycobacterium tuberculosis complex</taxon>
    </lineage>
</organism>
<accession>P9WPU1</accession>
<accession>L0T5H9</accession>
<accession>Q10876</accession>
<proteinExistence type="evidence at protein level"/>
<name>CTPA_MYCTU</name>
<comment type="function">
    <text evidence="5">Involved in copper export. Could be involved in the copper detoxification of mycobacterial cells.</text>
</comment>
<comment type="catalytic activity">
    <reaction evidence="5">
        <text>Cu(+)(in) + ATP + H2O = Cu(+)(out) + ADP + phosphate + H(+)</text>
        <dbReference type="Rhea" id="RHEA:25792"/>
        <dbReference type="ChEBI" id="CHEBI:15377"/>
        <dbReference type="ChEBI" id="CHEBI:15378"/>
        <dbReference type="ChEBI" id="CHEBI:30616"/>
        <dbReference type="ChEBI" id="CHEBI:43474"/>
        <dbReference type="ChEBI" id="CHEBI:49552"/>
        <dbReference type="ChEBI" id="CHEBI:456216"/>
        <dbReference type="EC" id="7.2.2.8"/>
    </reaction>
</comment>
<comment type="activity regulation">
    <text evidence="5">ATPase activity is stimulated by Cu(+) ions.</text>
</comment>
<comment type="biophysicochemical properties">
    <phDependence>
        <text evidence="5">Optimum pH is 7.5.</text>
    </phDependence>
    <temperatureDependence>
        <text evidence="5">Optimum temperature is 37 degrees Celsius. Active across a broad temperature range.</text>
    </temperatureDependence>
</comment>
<comment type="subcellular location">
    <subcellularLocation>
        <location evidence="5">Cell membrane</location>
        <topology evidence="2">Multi-pass membrane protein</topology>
    </subcellularLocation>
</comment>
<comment type="induction">
    <text evidence="4">Up-regulated in pulmonary and extrapulmonary TB patients.</text>
</comment>
<comment type="similarity">
    <text evidence="6">Belongs to the cation transport ATPase (P-type) (TC 3.A.3) family. Type IB subfamily.</text>
</comment>
<keyword id="KW-0007">Acetylation</keyword>
<keyword id="KW-0067">ATP-binding</keyword>
<keyword id="KW-1003">Cell membrane</keyword>
<keyword id="KW-0186">Copper</keyword>
<keyword id="KW-0187">Copper transport</keyword>
<keyword id="KW-0406">Ion transport</keyword>
<keyword id="KW-0472">Membrane</keyword>
<keyword id="KW-0479">Metal-binding</keyword>
<keyword id="KW-0547">Nucleotide-binding</keyword>
<keyword id="KW-1185">Reference proteome</keyword>
<keyword id="KW-1278">Translocase</keyword>
<keyword id="KW-0812">Transmembrane</keyword>
<keyword id="KW-1133">Transmembrane helix</keyword>
<keyword id="KW-0813">Transport</keyword>
<reference key="1">
    <citation type="journal article" date="1998" name="Nature">
        <title>Deciphering the biology of Mycobacterium tuberculosis from the complete genome sequence.</title>
        <authorList>
            <person name="Cole S.T."/>
            <person name="Brosch R."/>
            <person name="Parkhill J."/>
            <person name="Garnier T."/>
            <person name="Churcher C.M."/>
            <person name="Harris D.E."/>
            <person name="Gordon S.V."/>
            <person name="Eiglmeier K."/>
            <person name="Gas S."/>
            <person name="Barry C.E. III"/>
            <person name="Tekaia F."/>
            <person name="Badcock K."/>
            <person name="Basham D."/>
            <person name="Brown D."/>
            <person name="Chillingworth T."/>
            <person name="Connor R."/>
            <person name="Davies R.M."/>
            <person name="Devlin K."/>
            <person name="Feltwell T."/>
            <person name="Gentles S."/>
            <person name="Hamlin N."/>
            <person name="Holroyd S."/>
            <person name="Hornsby T."/>
            <person name="Jagels K."/>
            <person name="Krogh A."/>
            <person name="McLean J."/>
            <person name="Moule S."/>
            <person name="Murphy L.D."/>
            <person name="Oliver S."/>
            <person name="Osborne J."/>
            <person name="Quail M.A."/>
            <person name="Rajandream M.A."/>
            <person name="Rogers J."/>
            <person name="Rutter S."/>
            <person name="Seeger K."/>
            <person name="Skelton S."/>
            <person name="Squares S."/>
            <person name="Squares R."/>
            <person name="Sulston J.E."/>
            <person name="Taylor K."/>
            <person name="Whitehead S."/>
            <person name="Barrell B.G."/>
        </authorList>
    </citation>
    <scope>NUCLEOTIDE SEQUENCE [LARGE SCALE GENOMIC DNA]</scope>
    <source>
        <strain>ATCC 25618 / H37Rv</strain>
    </source>
</reference>
<reference key="2">
    <citation type="journal article" date="2011" name="Microb. Pathog.">
        <title>Identification of Mycobacterium tuberculosis genes preferentially expressed during human infection.</title>
        <authorList>
            <person name="Kumar M."/>
            <person name="Khan F.G."/>
            <person name="Sharma S."/>
            <person name="Kumar R."/>
            <person name="Faujdar J."/>
            <person name="Sharma R."/>
            <person name="Chauhan D.S."/>
            <person name="Singh R."/>
            <person name="Magotra S.K."/>
            <person name="Khan I.A."/>
        </authorList>
    </citation>
    <scope>INDUCTION</scope>
</reference>
<reference key="3">
    <citation type="journal article" date="2011" name="Mol. Cell. Proteomics">
        <title>Proteogenomic analysis of Mycobacterium tuberculosis by high resolution mass spectrometry.</title>
        <authorList>
            <person name="Kelkar D.S."/>
            <person name="Kumar D."/>
            <person name="Kumar P."/>
            <person name="Balakrishnan L."/>
            <person name="Muthusamy B."/>
            <person name="Yadav A.K."/>
            <person name="Shrivastava P."/>
            <person name="Marimuthu A."/>
            <person name="Anand S."/>
            <person name="Sundaram H."/>
            <person name="Kingsbury R."/>
            <person name="Harsha H.C."/>
            <person name="Nair B."/>
            <person name="Prasad T.S."/>
            <person name="Chauhan D.S."/>
            <person name="Katoch K."/>
            <person name="Katoch V.M."/>
            <person name="Kumar P."/>
            <person name="Chaerkady R."/>
            <person name="Ramachandran S."/>
            <person name="Dash D."/>
            <person name="Pandey A."/>
        </authorList>
    </citation>
    <scope>ACETYLATION [LARGE SCALE ANALYSIS] AT THR-2</scope>
    <scope>CLEAVAGE OF INITIATOR METHIONINE [LARGE SCALE ANALYSIS]</scope>
    <scope>IDENTIFICATION BY MASS SPECTROMETRY [LARGE SCALE ANALYSIS]</scope>
    <source>
        <strain>ATCC 25618 / H37Rv</strain>
    </source>
</reference>
<reference key="4">
    <citation type="journal article" date="2015" name="BioMetals">
        <title>CtpA, a putative Mycobacterium tuberculosis P-type ATPase, is stimulated by copper (I) in the mycobacterial plasma membrane.</title>
        <authorList>
            <person name="Leon-Torres A."/>
            <person name="Novoa-Aponte L."/>
            <person name="Soto C.Y."/>
        </authorList>
    </citation>
    <scope>FUNCTION</scope>
    <scope>CATALYTIC ACTIVITY</scope>
    <scope>ACTIVITY REGULATION</scope>
    <scope>BIOPHYSICOCHEMICAL PROPERTIES</scope>
    <scope>SUBCELLULAR LOCATION</scope>
    <source>
        <strain>H37Rv</strain>
    </source>
</reference>
<gene>
    <name type="primary">ctpA</name>
    <name type="ordered locus">Rv0092</name>
    <name type="ORF">MTCY251.11</name>
</gene>